<name>NU6M_GADMO</name>
<evidence type="ECO:0000250" key="1"/>
<evidence type="ECO:0000255" key="2"/>
<evidence type="ECO:0000305" key="3"/>
<accession>P55783</accession>
<organism>
    <name type="scientific">Gadus morhua</name>
    <name type="common">Atlantic cod</name>
    <dbReference type="NCBI Taxonomy" id="8049"/>
    <lineage>
        <taxon>Eukaryota</taxon>
        <taxon>Metazoa</taxon>
        <taxon>Chordata</taxon>
        <taxon>Craniata</taxon>
        <taxon>Vertebrata</taxon>
        <taxon>Euteleostomi</taxon>
        <taxon>Actinopterygii</taxon>
        <taxon>Neopterygii</taxon>
        <taxon>Teleostei</taxon>
        <taxon>Neoteleostei</taxon>
        <taxon>Acanthomorphata</taxon>
        <taxon>Zeiogadaria</taxon>
        <taxon>Gadariae</taxon>
        <taxon>Gadiformes</taxon>
        <taxon>Gadoidei</taxon>
        <taxon>Gadidae</taxon>
        <taxon>Gadus</taxon>
    </lineage>
</organism>
<sequence length="173" mass="18090">MAYIMLTLLIGMVLGVISVASNPSPYFAALGLVLVAGVGCVVLMGHGGSFLSLVLFLIYLGGMLVVFAYCAALAAEPYPEAWGEWSVLGSVLGYLLLVVGAGSWFWGGWYEGMWVPVDELIEFSVVAADSGGVALMYSLGGGLLVVSAWVLLLTLLVVLELTRGLARGALRAV</sequence>
<comment type="function">
    <text evidence="1">Core subunit of the mitochondrial membrane respiratory chain NADH dehydrogenase (Complex I) that is believed to belong to the minimal assembly required for catalysis. Complex I functions in the transfer of electrons from NADH to the respiratory chain. The immediate electron acceptor for the enzyme is believed to be ubiquinone (By similarity).</text>
</comment>
<comment type="catalytic activity">
    <reaction>
        <text>a ubiquinone + NADH + 5 H(+)(in) = a ubiquinol + NAD(+) + 4 H(+)(out)</text>
        <dbReference type="Rhea" id="RHEA:29091"/>
        <dbReference type="Rhea" id="RHEA-COMP:9565"/>
        <dbReference type="Rhea" id="RHEA-COMP:9566"/>
        <dbReference type="ChEBI" id="CHEBI:15378"/>
        <dbReference type="ChEBI" id="CHEBI:16389"/>
        <dbReference type="ChEBI" id="CHEBI:17976"/>
        <dbReference type="ChEBI" id="CHEBI:57540"/>
        <dbReference type="ChEBI" id="CHEBI:57945"/>
        <dbReference type="EC" id="7.1.1.2"/>
    </reaction>
</comment>
<comment type="subcellular location">
    <subcellularLocation>
        <location evidence="3">Mitochondrion membrane</location>
        <topology evidence="3">Multi-pass membrane protein</topology>
    </subcellularLocation>
</comment>
<comment type="similarity">
    <text evidence="3">Belongs to the complex I subunit 6 family.</text>
</comment>
<gene>
    <name type="primary">MT-ND6</name>
    <name type="synonym">MTND6</name>
    <name type="synonym">NADH6</name>
    <name type="synonym">ND6</name>
</gene>
<geneLocation type="mitochondrion"/>
<dbReference type="EC" id="7.1.1.2"/>
<dbReference type="EMBL" id="X99772">
    <property type="protein sequence ID" value="CAA68116.1"/>
    <property type="molecule type" value="Genomic_DNA"/>
</dbReference>
<dbReference type="PIR" id="T11831">
    <property type="entry name" value="T11831"/>
</dbReference>
<dbReference type="RefSeq" id="NP_007820.1">
    <property type="nucleotide sequence ID" value="NC_002081.1"/>
</dbReference>
<dbReference type="SMR" id="P55783"/>
<dbReference type="GeneID" id="808451"/>
<dbReference type="CTD" id="4541"/>
<dbReference type="OrthoDB" id="9837654at2759"/>
<dbReference type="Proteomes" id="UP000694546">
    <property type="component" value="Unplaced"/>
</dbReference>
<dbReference type="GO" id="GO:0031966">
    <property type="term" value="C:mitochondrial membrane"/>
    <property type="evidence" value="ECO:0007669"/>
    <property type="project" value="UniProtKB-SubCell"/>
</dbReference>
<dbReference type="GO" id="GO:0008137">
    <property type="term" value="F:NADH dehydrogenase (ubiquinone) activity"/>
    <property type="evidence" value="ECO:0007669"/>
    <property type="project" value="UniProtKB-EC"/>
</dbReference>
<dbReference type="InterPro" id="IPR050269">
    <property type="entry name" value="ComplexI_Subunit6"/>
</dbReference>
<dbReference type="InterPro" id="IPR001457">
    <property type="entry name" value="NADH_UbQ/plastoQ_OxRdtase_su6"/>
</dbReference>
<dbReference type="PANTHER" id="PTHR11435">
    <property type="entry name" value="NADH UBIQUINONE OXIDOREDUCTASE SUBUNIT ND6"/>
    <property type="match status" value="1"/>
</dbReference>
<dbReference type="PANTHER" id="PTHR11435:SF1">
    <property type="entry name" value="NADH-UBIQUINONE OXIDOREDUCTASE CHAIN 6"/>
    <property type="match status" value="1"/>
</dbReference>
<dbReference type="Pfam" id="PF00499">
    <property type="entry name" value="Oxidored_q3"/>
    <property type="match status" value="1"/>
</dbReference>
<protein>
    <recommendedName>
        <fullName>NADH-ubiquinone oxidoreductase chain 6</fullName>
        <ecNumber>7.1.1.2</ecNumber>
    </recommendedName>
    <alternativeName>
        <fullName>NADH dehydrogenase subunit 6</fullName>
    </alternativeName>
</protein>
<keyword id="KW-0249">Electron transport</keyword>
<keyword id="KW-0472">Membrane</keyword>
<keyword id="KW-0496">Mitochondrion</keyword>
<keyword id="KW-0520">NAD</keyword>
<keyword id="KW-1185">Reference proteome</keyword>
<keyword id="KW-0679">Respiratory chain</keyword>
<keyword id="KW-1278">Translocase</keyword>
<keyword id="KW-0812">Transmembrane</keyword>
<keyword id="KW-1133">Transmembrane helix</keyword>
<keyword id="KW-0813">Transport</keyword>
<keyword id="KW-0830">Ubiquinone</keyword>
<feature type="chain" id="PRO_0000118285" description="NADH-ubiquinone oxidoreductase chain 6">
    <location>
        <begin position="1"/>
        <end position="173"/>
    </location>
</feature>
<feature type="transmembrane region" description="Helical" evidence="2">
    <location>
        <begin position="1"/>
        <end position="21"/>
    </location>
</feature>
<feature type="transmembrane region" description="Helical" evidence="2">
    <location>
        <begin position="25"/>
        <end position="45"/>
    </location>
</feature>
<feature type="transmembrane region" description="Helical" evidence="2">
    <location>
        <begin position="53"/>
        <end position="73"/>
    </location>
</feature>
<feature type="transmembrane region" description="Helical" evidence="2">
    <location>
        <begin position="87"/>
        <end position="107"/>
    </location>
</feature>
<feature type="transmembrane region" description="Helical" evidence="2">
    <location>
        <begin position="139"/>
        <end position="159"/>
    </location>
</feature>
<proteinExistence type="inferred from homology"/>
<reference key="1">
    <citation type="journal article" date="1996" name="Mol. Mar. Biol. Biotechnol.">
        <title>The complete mitochondrial DNA sequence of Atlantic cod (Gadus morhua): relevance to taxonomic studies among codfishes.</title>
        <authorList>
            <person name="Johansen S."/>
            <person name="Bakke I."/>
        </authorList>
    </citation>
    <scope>NUCLEOTIDE SEQUENCE [GENOMIC DNA]</scope>
    <source>
        <strain>Norwegian coastal 1</strain>
    </source>
</reference>